<name>RL16_SACD2</name>
<protein>
    <recommendedName>
        <fullName evidence="1">Large ribosomal subunit protein uL16</fullName>
    </recommendedName>
    <alternativeName>
        <fullName evidence="3">50S ribosomal protein L16</fullName>
    </alternativeName>
</protein>
<organism>
    <name type="scientific">Saccharophagus degradans (strain 2-40 / ATCC 43961 / DSM 17024)</name>
    <dbReference type="NCBI Taxonomy" id="203122"/>
    <lineage>
        <taxon>Bacteria</taxon>
        <taxon>Pseudomonadati</taxon>
        <taxon>Pseudomonadota</taxon>
        <taxon>Gammaproteobacteria</taxon>
        <taxon>Cellvibrionales</taxon>
        <taxon>Cellvibrionaceae</taxon>
        <taxon>Saccharophagus</taxon>
    </lineage>
</organism>
<gene>
    <name evidence="1" type="primary">rplP</name>
    <name type="ordered locus">Sde_0967</name>
</gene>
<proteinExistence type="inferred from homology"/>
<keyword id="KW-1185">Reference proteome</keyword>
<keyword id="KW-0687">Ribonucleoprotein</keyword>
<keyword id="KW-0689">Ribosomal protein</keyword>
<keyword id="KW-0694">RNA-binding</keyword>
<keyword id="KW-0699">rRNA-binding</keyword>
<keyword id="KW-0820">tRNA-binding</keyword>
<accession>Q21M50</accession>
<dbReference type="EMBL" id="CP000282">
    <property type="protein sequence ID" value="ABD80229.1"/>
    <property type="molecule type" value="Genomic_DNA"/>
</dbReference>
<dbReference type="RefSeq" id="WP_011467449.1">
    <property type="nucleotide sequence ID" value="NC_007912.1"/>
</dbReference>
<dbReference type="SMR" id="Q21M50"/>
<dbReference type="STRING" id="203122.Sde_0967"/>
<dbReference type="GeneID" id="98612652"/>
<dbReference type="KEGG" id="sde:Sde_0967"/>
<dbReference type="eggNOG" id="COG0197">
    <property type="taxonomic scope" value="Bacteria"/>
</dbReference>
<dbReference type="HOGENOM" id="CLU_078858_2_1_6"/>
<dbReference type="OrthoDB" id="9802589at2"/>
<dbReference type="Proteomes" id="UP000001947">
    <property type="component" value="Chromosome"/>
</dbReference>
<dbReference type="GO" id="GO:0022625">
    <property type="term" value="C:cytosolic large ribosomal subunit"/>
    <property type="evidence" value="ECO:0007669"/>
    <property type="project" value="TreeGrafter"/>
</dbReference>
<dbReference type="GO" id="GO:0019843">
    <property type="term" value="F:rRNA binding"/>
    <property type="evidence" value="ECO:0007669"/>
    <property type="project" value="UniProtKB-UniRule"/>
</dbReference>
<dbReference type="GO" id="GO:0003735">
    <property type="term" value="F:structural constituent of ribosome"/>
    <property type="evidence" value="ECO:0007669"/>
    <property type="project" value="InterPro"/>
</dbReference>
<dbReference type="GO" id="GO:0000049">
    <property type="term" value="F:tRNA binding"/>
    <property type="evidence" value="ECO:0007669"/>
    <property type="project" value="UniProtKB-KW"/>
</dbReference>
<dbReference type="GO" id="GO:0006412">
    <property type="term" value="P:translation"/>
    <property type="evidence" value="ECO:0007669"/>
    <property type="project" value="UniProtKB-UniRule"/>
</dbReference>
<dbReference type="CDD" id="cd01433">
    <property type="entry name" value="Ribosomal_L16_L10e"/>
    <property type="match status" value="1"/>
</dbReference>
<dbReference type="FunFam" id="3.90.1170.10:FF:000001">
    <property type="entry name" value="50S ribosomal protein L16"/>
    <property type="match status" value="1"/>
</dbReference>
<dbReference type="Gene3D" id="3.90.1170.10">
    <property type="entry name" value="Ribosomal protein L10e/L16"/>
    <property type="match status" value="1"/>
</dbReference>
<dbReference type="HAMAP" id="MF_01342">
    <property type="entry name" value="Ribosomal_uL16"/>
    <property type="match status" value="1"/>
</dbReference>
<dbReference type="InterPro" id="IPR047873">
    <property type="entry name" value="Ribosomal_uL16"/>
</dbReference>
<dbReference type="InterPro" id="IPR000114">
    <property type="entry name" value="Ribosomal_uL16_bact-type"/>
</dbReference>
<dbReference type="InterPro" id="IPR020798">
    <property type="entry name" value="Ribosomal_uL16_CS"/>
</dbReference>
<dbReference type="InterPro" id="IPR016180">
    <property type="entry name" value="Ribosomal_uL16_dom"/>
</dbReference>
<dbReference type="InterPro" id="IPR036920">
    <property type="entry name" value="Ribosomal_uL16_sf"/>
</dbReference>
<dbReference type="NCBIfam" id="TIGR01164">
    <property type="entry name" value="rplP_bact"/>
    <property type="match status" value="1"/>
</dbReference>
<dbReference type="PANTHER" id="PTHR12220">
    <property type="entry name" value="50S/60S RIBOSOMAL PROTEIN L16"/>
    <property type="match status" value="1"/>
</dbReference>
<dbReference type="PANTHER" id="PTHR12220:SF13">
    <property type="entry name" value="LARGE RIBOSOMAL SUBUNIT PROTEIN UL16M"/>
    <property type="match status" value="1"/>
</dbReference>
<dbReference type="Pfam" id="PF00252">
    <property type="entry name" value="Ribosomal_L16"/>
    <property type="match status" value="1"/>
</dbReference>
<dbReference type="PRINTS" id="PR00060">
    <property type="entry name" value="RIBOSOMALL16"/>
</dbReference>
<dbReference type="SUPFAM" id="SSF54686">
    <property type="entry name" value="Ribosomal protein L16p/L10e"/>
    <property type="match status" value="1"/>
</dbReference>
<dbReference type="PROSITE" id="PS00586">
    <property type="entry name" value="RIBOSOMAL_L16_1"/>
    <property type="match status" value="1"/>
</dbReference>
<feature type="chain" id="PRO_0000251669" description="Large ribosomal subunit protein uL16">
    <location>
        <begin position="1"/>
        <end position="137"/>
    </location>
</feature>
<feature type="region of interest" description="Disordered" evidence="2">
    <location>
        <begin position="1"/>
        <end position="22"/>
    </location>
</feature>
<sequence>MLQPKRTKFRKQQKGRNRGLAHRGSKVSFGEFALKATGRGRITARQIEAARRAMTRHVKRGGKIWIRVFPDKPITEKPLEVRQGKGKGNVEYWVCQIQPGKVLYEMEGVSEELAREAFTLAAAKLPVTTTFVKRSVM</sequence>
<comment type="function">
    <text evidence="1">Binds 23S rRNA and is also seen to make contacts with the A and possibly P site tRNAs.</text>
</comment>
<comment type="subunit">
    <text evidence="1">Part of the 50S ribosomal subunit.</text>
</comment>
<comment type="similarity">
    <text evidence="1">Belongs to the universal ribosomal protein uL16 family.</text>
</comment>
<reference key="1">
    <citation type="journal article" date="2008" name="PLoS Genet.">
        <title>Complete genome sequence of the complex carbohydrate-degrading marine bacterium, Saccharophagus degradans strain 2-40 T.</title>
        <authorList>
            <person name="Weiner R.M."/>
            <person name="Taylor L.E. II"/>
            <person name="Henrissat B."/>
            <person name="Hauser L."/>
            <person name="Land M."/>
            <person name="Coutinho P.M."/>
            <person name="Rancurel C."/>
            <person name="Saunders E.H."/>
            <person name="Longmire A.G."/>
            <person name="Zhang H."/>
            <person name="Bayer E.A."/>
            <person name="Gilbert H.J."/>
            <person name="Larimer F."/>
            <person name="Zhulin I.B."/>
            <person name="Ekborg N.A."/>
            <person name="Lamed R."/>
            <person name="Richardson P.M."/>
            <person name="Borovok I."/>
            <person name="Hutcheson S."/>
        </authorList>
    </citation>
    <scope>NUCLEOTIDE SEQUENCE [LARGE SCALE GENOMIC DNA]</scope>
    <source>
        <strain>2-40 / ATCC 43961 / DSM 17024</strain>
    </source>
</reference>
<evidence type="ECO:0000255" key="1">
    <source>
        <dbReference type="HAMAP-Rule" id="MF_01342"/>
    </source>
</evidence>
<evidence type="ECO:0000256" key="2">
    <source>
        <dbReference type="SAM" id="MobiDB-lite"/>
    </source>
</evidence>
<evidence type="ECO:0000305" key="3"/>